<sequence>MASLQFHGNVDADIRYDISLDPARESNLFRLLMGLQLANGTKPSPRLPKWWPKRLEMIGKVLPKAYCSMVIFTSLHLGVLFTKTTLDVLPTGELQAITDALTMTIIYFFTGYGTIYWCLRSRRLLAYMEHMNREYRHHSLAGVTFVSSHAAFRMSRNFTVVWIMSCLLGVISWGVSPLMLGIRMLPLQCWYPFDALGPGTYTAVYATQLFGQIMVGMTFGFGGSLFVTLSLLLLGQFDVLYCSLKNLDAHTKLLGGESVNGLSSLQEELLLGDSKRELNQYVLLQEHPTDLLRLSAGRKCPDQGNAFHNALVECIRLHRFILHCSQELENLFSPYCLVKSLQITFQLCLLVFVGVSGTREVLRIVNQLQYLGLTIFELLMFTYCGELLSRHSIRSGDAFWRGAWWKHAHFIRQDILIFLVNSRRAVHVTAGKFYVMDVNRLRSVITQAFSFLTLLQKLAAKKTESEL</sequence>
<evidence type="ECO:0000250" key="1"/>
<evidence type="ECO:0000255" key="2"/>
<evidence type="ECO:0000269" key="3">
    <source>
    </source>
</evidence>
<evidence type="ECO:0000269" key="4">
    <source>
    </source>
</evidence>
<evidence type="ECO:0000305" key="5"/>
<proteinExistence type="evidence at transcript level"/>
<feature type="chain" id="PRO_0000174278" description="Putative odorant receptor 85e">
    <location>
        <begin position="1"/>
        <end position="467"/>
    </location>
</feature>
<feature type="topological domain" description="Cytoplasmic" evidence="2">
    <location>
        <begin position="1"/>
        <end position="60"/>
    </location>
</feature>
<feature type="transmembrane region" description="Helical; Name=1" evidence="2">
    <location>
        <begin position="61"/>
        <end position="81"/>
    </location>
</feature>
<feature type="topological domain" description="Extracellular" evidence="2">
    <location>
        <begin position="82"/>
        <end position="98"/>
    </location>
</feature>
<feature type="transmembrane region" description="Helical; Name=2" evidence="2">
    <location>
        <begin position="99"/>
        <end position="119"/>
    </location>
</feature>
<feature type="topological domain" description="Cytoplasmic" evidence="2">
    <location>
        <begin position="120"/>
        <end position="159"/>
    </location>
</feature>
<feature type="transmembrane region" description="Helical; Name=3" evidence="2">
    <location>
        <begin position="160"/>
        <end position="180"/>
    </location>
</feature>
<feature type="topological domain" description="Extracellular" evidence="2">
    <location>
        <begin position="181"/>
        <end position="212"/>
    </location>
</feature>
<feature type="transmembrane region" description="Helical; Name=4" evidence="2">
    <location>
        <begin position="213"/>
        <end position="233"/>
    </location>
</feature>
<feature type="topological domain" description="Cytoplasmic" evidence="2">
    <location>
        <begin position="234"/>
        <end position="286"/>
    </location>
</feature>
<feature type="transmembrane region" description="Helical; Name=5" evidence="2">
    <location>
        <begin position="287"/>
        <end position="307"/>
    </location>
</feature>
<feature type="topological domain" description="Extracellular" evidence="2">
    <location>
        <begin position="308"/>
        <end position="334"/>
    </location>
</feature>
<feature type="transmembrane region" description="Helical; Name=6" evidence="2">
    <location>
        <begin position="335"/>
        <end position="355"/>
    </location>
</feature>
<feature type="topological domain" description="Cytoplasmic" evidence="2">
    <location>
        <begin position="356"/>
        <end position="367"/>
    </location>
</feature>
<feature type="transmembrane region" description="Helical; Name=7" evidence="2">
    <location>
        <begin position="368"/>
        <end position="388"/>
    </location>
</feature>
<feature type="topological domain" description="Extracellular" evidence="2">
    <location>
        <begin position="389"/>
        <end position="467"/>
    </location>
</feature>
<keyword id="KW-1003">Cell membrane</keyword>
<keyword id="KW-0472">Membrane</keyword>
<keyword id="KW-0552">Olfaction</keyword>
<keyword id="KW-0675">Receptor</keyword>
<keyword id="KW-0716">Sensory transduction</keyword>
<keyword id="KW-0807">Transducer</keyword>
<keyword id="KW-0812">Transmembrane</keyword>
<keyword id="KW-1133">Transmembrane helix</keyword>
<reference key="1">
    <citation type="journal article" date="1999" name="Cell">
        <title>A spatial map of olfactory receptor expression in the Drosophila antenna.</title>
        <authorList>
            <person name="Vosshall L.B."/>
            <person name="Amrein H."/>
            <person name="Morozov P.S."/>
            <person name="Rzhetsky A."/>
            <person name="Axel R."/>
        </authorList>
    </citation>
    <scope>NUCLEOTIDE SEQUENCE [MRNA]</scope>
    <scope>TISSUE SPECIFICITY</scope>
    <source>
        <strain>Oregon-R</strain>
        <tissue>Maxillary palp</tissue>
    </source>
</reference>
<reference key="2">
    <citation type="journal article" date="2000" name="Cell">
        <title>An olfactory sensory map in the fly brain.</title>
        <authorList>
            <person name="Vosshall L.B."/>
            <person name="Wong A.M."/>
            <person name="Axel R."/>
        </authorList>
    </citation>
    <scope>TISSUE SPECIFICITY</scope>
</reference>
<dbReference type="EMBL" id="AF127922">
    <property type="protein sequence ID" value="AAD26357.1"/>
    <property type="molecule type" value="mRNA"/>
</dbReference>
<dbReference type="RefSeq" id="NP_001262374.1">
    <property type="nucleotide sequence ID" value="NM_001275445.1"/>
</dbReference>
<dbReference type="SMR" id="P81924"/>
<dbReference type="STRING" id="7227.FBpp0301983"/>
<dbReference type="PaxDb" id="7227-FBpp0301983"/>
<dbReference type="EnsemblMetazoa" id="FBtr0310300">
    <property type="protein sequence ID" value="FBpp0301983"/>
    <property type="gene ID" value="FBgn0026399"/>
</dbReference>
<dbReference type="GeneID" id="41018"/>
<dbReference type="KEGG" id="dme:Dmel_CG9700"/>
<dbReference type="AGR" id="FB:FBgn0026399"/>
<dbReference type="CTD" id="41018"/>
<dbReference type="FlyBase" id="FBgn0026399">
    <property type="gene designation" value="Or85e"/>
</dbReference>
<dbReference type="VEuPathDB" id="VectorBase:FBgn0026399"/>
<dbReference type="eggNOG" id="ENOG502SAW0">
    <property type="taxonomic scope" value="Eukaryota"/>
</dbReference>
<dbReference type="HOGENOM" id="CLU_585637_0_0_1"/>
<dbReference type="OMA" id="MFTYCGE"/>
<dbReference type="OrthoDB" id="8185860at2759"/>
<dbReference type="BioGRID-ORCS" id="41018">
    <property type="hits" value="0 hits in 1 CRISPR screen"/>
</dbReference>
<dbReference type="GenomeRNAi" id="41018"/>
<dbReference type="PRO" id="PR:P81924"/>
<dbReference type="Bgee" id="FBgn0026399">
    <property type="expression patterns" value="Expressed in maxillary palp olfactory receptor neuron (Drosophila) in proboscis and 3 other cell types or tissues"/>
</dbReference>
<dbReference type="ExpressionAtlas" id="P81924">
    <property type="expression patterns" value="baseline and differential"/>
</dbReference>
<dbReference type="GO" id="GO:0032590">
    <property type="term" value="C:dendrite membrane"/>
    <property type="evidence" value="ECO:0000250"/>
    <property type="project" value="FlyBase"/>
</dbReference>
<dbReference type="GO" id="GO:0005886">
    <property type="term" value="C:plasma membrane"/>
    <property type="evidence" value="ECO:0000255"/>
    <property type="project" value="FlyBase"/>
</dbReference>
<dbReference type="GO" id="GO:0170020">
    <property type="term" value="F:ionotropic olfactory receptor activity"/>
    <property type="evidence" value="ECO:0000255"/>
    <property type="project" value="FlyBase"/>
</dbReference>
<dbReference type="GO" id="GO:0005549">
    <property type="term" value="F:odorant binding"/>
    <property type="evidence" value="ECO:0000250"/>
    <property type="project" value="FlyBase"/>
</dbReference>
<dbReference type="GO" id="GO:0004984">
    <property type="term" value="F:olfactory receptor activity"/>
    <property type="evidence" value="ECO:0000318"/>
    <property type="project" value="GO_Central"/>
</dbReference>
<dbReference type="GO" id="GO:0050911">
    <property type="term" value="P:detection of chemical stimulus involved in sensory perception of smell"/>
    <property type="evidence" value="ECO:0000315"/>
    <property type="project" value="FlyBase"/>
</dbReference>
<dbReference type="GO" id="GO:0007608">
    <property type="term" value="P:sensory perception of smell"/>
    <property type="evidence" value="ECO:0000270"/>
    <property type="project" value="FlyBase"/>
</dbReference>
<dbReference type="GO" id="GO:0007165">
    <property type="term" value="P:signal transduction"/>
    <property type="evidence" value="ECO:0007669"/>
    <property type="project" value="UniProtKB-KW"/>
</dbReference>
<dbReference type="InterPro" id="IPR004117">
    <property type="entry name" value="7tm6_olfct_rcpt"/>
</dbReference>
<dbReference type="PANTHER" id="PTHR21137">
    <property type="entry name" value="ODORANT RECEPTOR"/>
    <property type="match status" value="1"/>
</dbReference>
<dbReference type="PANTHER" id="PTHR21137:SF42">
    <property type="entry name" value="ODORANT RECEPTOR 83A"/>
    <property type="match status" value="1"/>
</dbReference>
<dbReference type="Pfam" id="PF02949">
    <property type="entry name" value="7tm_6"/>
    <property type="match status" value="1"/>
</dbReference>
<accession>P81924</accession>
<accession>Q9VHP5</accession>
<comment type="function">
    <text evidence="1">Odorant receptor which mediates acceptance or avoidance behavior, depending on its substrates. The odorant receptor repertoire encodes a large collection of odor stimuli that vary widely in identity, intensity, and duration. May form a complex with Orco to form odorant-sensing units, providing sensitive and prolonged odorant signaling and calcium permeability (By similarity).</text>
</comment>
<comment type="subunit">
    <text evidence="1">Interacts with Orco. Complexes exist early in the endomembrane system in olfactory sensory neurons (OSNs), coupling these complexes to the conserved ciliary trafficking pathway (By similarity).</text>
</comment>
<comment type="subcellular location">
    <subcellularLocation>
        <location evidence="1">Cell membrane</location>
        <topology evidence="1">Multi-pass membrane protein</topology>
    </subcellularLocation>
</comment>
<comment type="tissue specificity">
    <text evidence="3 4">Expressed in 15% of the 120 sensory neurons within the maxillary palp.</text>
</comment>
<comment type="miscellaneous">
    <text>The atypical heteromeric and topological design of the odorant receptors appears to be an insect-specific solution for odor recognition, making the OR/Orco complex an attractive target for the development of highly selective insect repellents to disrupt olfactory-mediated host-seeking behaviors of insect disease vectors. Odor-evoked OR currents are independent of known G-protein-coupled second messenger pathways.</text>
</comment>
<comment type="similarity">
    <text evidence="5">Belongs to the insect chemoreceptor superfamily. Heteromeric odorant receptor channel (TC 1.A.69) family. Or2a subfamily.</text>
</comment>
<comment type="caution">
    <text evidence="5">The strain (Berkeley) sequenced by the collaborative genome project contains a 3' deletion and is considered a pseudogene.</text>
</comment>
<gene>
    <name type="primary">Or85e</name>
    <name type="synonym">dor104</name>
    <name type="synonym">OR104</name>
</gene>
<organism>
    <name type="scientific">Drosophila melanogaster</name>
    <name type="common">Fruit fly</name>
    <dbReference type="NCBI Taxonomy" id="7227"/>
    <lineage>
        <taxon>Eukaryota</taxon>
        <taxon>Metazoa</taxon>
        <taxon>Ecdysozoa</taxon>
        <taxon>Arthropoda</taxon>
        <taxon>Hexapoda</taxon>
        <taxon>Insecta</taxon>
        <taxon>Pterygota</taxon>
        <taxon>Neoptera</taxon>
        <taxon>Endopterygota</taxon>
        <taxon>Diptera</taxon>
        <taxon>Brachycera</taxon>
        <taxon>Muscomorpha</taxon>
        <taxon>Ephydroidea</taxon>
        <taxon>Drosophilidae</taxon>
        <taxon>Drosophila</taxon>
        <taxon>Sophophora</taxon>
    </lineage>
</organism>
<name>OR85E_DROME</name>
<protein>
    <recommendedName>
        <fullName>Putative odorant receptor 85e</fullName>
    </recommendedName>
</protein>